<gene>
    <name type="primary">Unc5a</name>
    <name type="synonym">Kiaa1976</name>
    <name type="synonym">Unc5h1</name>
</gene>
<reference key="1">
    <citation type="journal article" date="2002" name="Mech. Dev.">
        <title>Cloning of three mouse Unc5 genes and their expression patterns at mid-gestation.</title>
        <authorList>
            <person name="Engelkamp D."/>
        </authorList>
    </citation>
    <scope>NUCLEOTIDE SEQUENCE [MRNA] (ISOFORM 1)</scope>
    <scope>TISSUE SPECIFICITY</scope>
</reference>
<reference key="2">
    <citation type="journal article" date="2003" name="DNA Res.">
        <title>Prediction of the coding sequences of mouse homologues of KIAA gene: II. The complete nucleotide sequences of 400 mouse KIAA-homologous cDNAs identified by screening of terminal sequences of cDNA clones randomly sampled from size-fractionated libraries.</title>
        <authorList>
            <person name="Okazaki N."/>
            <person name="Kikuno R."/>
            <person name="Ohara R."/>
            <person name="Inamoto S."/>
            <person name="Aizawa H."/>
            <person name="Yuasa S."/>
            <person name="Nakajima D."/>
            <person name="Nagase T."/>
            <person name="Ohara O."/>
            <person name="Koga H."/>
        </authorList>
    </citation>
    <scope>NUCLEOTIDE SEQUENCE [LARGE SCALE MRNA] (ISOFORM 3)</scope>
    <source>
        <tissue>Brain</tissue>
    </source>
</reference>
<reference key="3">
    <citation type="journal article" date="2004" name="Genome Res.">
        <title>The status, quality, and expansion of the NIH full-length cDNA project: the Mammalian Gene Collection (MGC).</title>
        <authorList>
            <consortium name="The MGC Project Team"/>
        </authorList>
    </citation>
    <scope>NUCLEOTIDE SEQUENCE [LARGE SCALE MRNA] (ISOFORM 2)</scope>
    <source>
        <strain>C57BL/6J</strain>
        <tissue>Brain</tissue>
    </source>
</reference>
<reference key="4">
    <citation type="journal article" date="2012" name="Neuron">
        <title>FLRT proteins are endogenous latrophilin ligands and regulate excitatory synapse development.</title>
        <authorList>
            <person name="O'Sullivan M.L."/>
            <person name="de Wit J."/>
            <person name="Savas J.N."/>
            <person name="Comoletti D."/>
            <person name="Otto-Hitt S."/>
            <person name="Yates J.R. III"/>
            <person name="Ghosh A."/>
        </authorList>
    </citation>
    <scope>INTERACTION WITH FLRT3</scope>
</reference>
<reference key="5">
    <citation type="journal article" date="2014" name="Neuron">
        <title>FLRT structure: balancing repulsion and cell adhesion in cortical and vascular development.</title>
        <authorList>
            <person name="Seiradake E."/>
            <person name="del Toro D."/>
            <person name="Nagel D."/>
            <person name="Cop F."/>
            <person name="Haertl R."/>
            <person name="Ruff T."/>
            <person name="Seyit-Bremer G."/>
            <person name="Harlos K."/>
            <person name="Border E.C."/>
            <person name="Acker-Palmer A."/>
            <person name="Jones E.Y."/>
            <person name="Klein R."/>
        </authorList>
    </citation>
    <scope>INTERACTION WITH FLRT2</scope>
</reference>
<reference key="6">
    <citation type="journal article" date="2017" name="Proc. Natl. Acad. Sci. U.S.A.">
        <title>Distinct C-mannosylation of netrin receptor thrombospondin type 1 repeats by mammalian DPY19L1 and DPY19L3.</title>
        <authorList>
            <person name="Shcherbakova A."/>
            <person name="Tiemann B."/>
            <person name="Buettner F.F."/>
            <person name="Bakker H."/>
        </authorList>
    </citation>
    <scope>SUBCELLULAR LOCATION</scope>
    <scope>GLYCOSYLATION AT TRP-245; TRP-248; TRP-251; TRP-301 AND TRP-304</scope>
</reference>
<keyword id="KW-0025">Alternative splicing</keyword>
<keyword id="KW-0053">Apoptosis</keyword>
<keyword id="KW-1003">Cell membrane</keyword>
<keyword id="KW-0966">Cell projection</keyword>
<keyword id="KW-0217">Developmental protein</keyword>
<keyword id="KW-1015">Disulfide bond</keyword>
<keyword id="KW-0325">Glycoprotein</keyword>
<keyword id="KW-0393">Immunoglobulin domain</keyword>
<keyword id="KW-0472">Membrane</keyword>
<keyword id="KW-0597">Phosphoprotein</keyword>
<keyword id="KW-0675">Receptor</keyword>
<keyword id="KW-1185">Reference proteome</keyword>
<keyword id="KW-0677">Repeat</keyword>
<keyword id="KW-0732">Signal</keyword>
<keyword id="KW-0812">Transmembrane</keyword>
<keyword id="KW-1133">Transmembrane helix</keyword>
<feature type="signal peptide" evidence="4">
    <location>
        <begin position="1"/>
        <end position="25"/>
    </location>
</feature>
<feature type="chain" id="PRO_0000036069" description="Netrin receptor UNC5A">
    <location>
        <begin position="26"/>
        <end position="898"/>
    </location>
</feature>
<feature type="topological domain" description="Extracellular" evidence="4">
    <location>
        <begin position="26"/>
        <end position="361"/>
    </location>
</feature>
<feature type="transmembrane region" description="Helical" evidence="4">
    <location>
        <begin position="362"/>
        <end position="382"/>
    </location>
</feature>
<feature type="topological domain" description="Cytoplasmic" evidence="4">
    <location>
        <begin position="383"/>
        <end position="898"/>
    </location>
</feature>
<feature type="domain" description="Ig-like">
    <location>
        <begin position="44"/>
        <end position="141"/>
    </location>
</feature>
<feature type="domain" description="Ig-like C2-type">
    <location>
        <begin position="155"/>
        <end position="234"/>
    </location>
</feature>
<feature type="domain" description="TSP type-1 1" evidence="5">
    <location>
        <begin position="242"/>
        <end position="296"/>
    </location>
</feature>
<feature type="domain" description="TSP type-1 2" evidence="5">
    <location>
        <begin position="298"/>
        <end position="350"/>
    </location>
</feature>
<feature type="domain" description="ZU5" evidence="6">
    <location>
        <begin position="497"/>
        <end position="640"/>
    </location>
</feature>
<feature type="domain" description="Death">
    <location>
        <begin position="817"/>
        <end position="897"/>
    </location>
</feature>
<feature type="region of interest" description="Interaction with DCC" evidence="1">
    <location>
        <begin position="661"/>
        <end position="679"/>
    </location>
</feature>
<feature type="site" description="Cleavage; by caspase-3" evidence="2">
    <location>
        <begin position="396"/>
        <end position="397"/>
    </location>
</feature>
<feature type="glycosylation site" description="N-linked (GlcNAc...) asparagine" evidence="4">
    <location>
        <position position="107"/>
    </location>
</feature>
<feature type="glycosylation site" description="N-linked (GlcNAc...) asparagine" evidence="4">
    <location>
        <position position="218"/>
    </location>
</feature>
<feature type="glycosylation site" description="C-linked (Man) tryptophan" evidence="10">
    <location>
        <position position="245"/>
    </location>
</feature>
<feature type="glycosylation site" description="C-linked (Man) tryptophan" evidence="10">
    <location>
        <position position="248"/>
    </location>
</feature>
<feature type="glycosylation site" description="C-linked (Man) tryptophan" evidence="10">
    <location>
        <position position="251"/>
    </location>
</feature>
<feature type="glycosylation site" description="C-linked (Man) tryptophan" evidence="10">
    <location>
        <position position="301"/>
    </location>
</feature>
<feature type="glycosylation site" description="C-linked (Man) tryptophan" evidence="10">
    <location>
        <position position="304"/>
    </location>
</feature>
<feature type="glycosylation site" description="N-linked (GlcNAc...) asparagine" evidence="4">
    <location>
        <position position="343"/>
    </location>
</feature>
<feature type="disulfide bond" evidence="3">
    <location>
        <begin position="65"/>
        <end position="126"/>
    </location>
</feature>
<feature type="disulfide bond" evidence="3">
    <location>
        <begin position="77"/>
        <end position="124"/>
    </location>
</feature>
<feature type="disulfide bond" evidence="3">
    <location>
        <begin position="170"/>
        <end position="221"/>
    </location>
</feature>
<feature type="disulfide bond" evidence="1">
    <location>
        <begin position="254"/>
        <end position="291"/>
    </location>
</feature>
<feature type="disulfide bond" evidence="1">
    <location>
        <begin position="258"/>
        <end position="295"/>
    </location>
</feature>
<feature type="disulfide bond" evidence="1">
    <location>
        <begin position="269"/>
        <end position="281"/>
    </location>
</feature>
<feature type="disulfide bond" evidence="3">
    <location>
        <begin position="310"/>
        <end position="344"/>
    </location>
</feature>
<feature type="disulfide bond" evidence="3">
    <location>
        <begin position="314"/>
        <end position="349"/>
    </location>
</feature>
<feature type="disulfide bond" evidence="3">
    <location>
        <begin position="322"/>
        <end position="334"/>
    </location>
</feature>
<feature type="splice variant" id="VSP_011696" description="In isoform 3." evidence="11">
    <location>
        <begin position="1"/>
        <end position="790"/>
    </location>
</feature>
<feature type="splice variant" id="VSP_011697" description="In isoform 2." evidence="12">
    <location>
        <begin position="241"/>
        <end position="296"/>
    </location>
</feature>
<feature type="sequence conflict" description="In Ref. 3; AAH58084." evidence="13" ref="3">
    <original>A</original>
    <variation>P</variation>
    <location>
        <position position="217"/>
    </location>
</feature>
<proteinExistence type="evidence at protein level"/>
<organism>
    <name type="scientific">Mus musculus</name>
    <name type="common">Mouse</name>
    <dbReference type="NCBI Taxonomy" id="10090"/>
    <lineage>
        <taxon>Eukaryota</taxon>
        <taxon>Metazoa</taxon>
        <taxon>Chordata</taxon>
        <taxon>Craniata</taxon>
        <taxon>Vertebrata</taxon>
        <taxon>Euteleostomi</taxon>
        <taxon>Mammalia</taxon>
        <taxon>Eutheria</taxon>
        <taxon>Euarchontoglires</taxon>
        <taxon>Glires</taxon>
        <taxon>Rodentia</taxon>
        <taxon>Myomorpha</taxon>
        <taxon>Muroidea</taxon>
        <taxon>Muridae</taxon>
        <taxon>Murinae</taxon>
        <taxon>Mus</taxon>
        <taxon>Mus</taxon>
    </lineage>
</organism>
<evidence type="ECO:0000250" key="1"/>
<evidence type="ECO:0000250" key="2">
    <source>
        <dbReference type="UniProtKB" id="O08721"/>
    </source>
</evidence>
<evidence type="ECO:0000250" key="3">
    <source>
        <dbReference type="UniProtKB" id="Q6ZN44"/>
    </source>
</evidence>
<evidence type="ECO:0000255" key="4"/>
<evidence type="ECO:0000255" key="5">
    <source>
        <dbReference type="PROSITE-ProRule" id="PRU00210"/>
    </source>
</evidence>
<evidence type="ECO:0000255" key="6">
    <source>
        <dbReference type="PROSITE-ProRule" id="PRU00485"/>
    </source>
</evidence>
<evidence type="ECO:0000269" key="7">
    <source>
    </source>
</evidence>
<evidence type="ECO:0000269" key="8">
    <source>
    </source>
</evidence>
<evidence type="ECO:0000269" key="9">
    <source>
    </source>
</evidence>
<evidence type="ECO:0000269" key="10">
    <source>
    </source>
</evidence>
<evidence type="ECO:0000303" key="11">
    <source>
    </source>
</evidence>
<evidence type="ECO:0000303" key="12">
    <source>
    </source>
</evidence>
<evidence type="ECO:0000305" key="13"/>
<name>UNC5A_MOUSE</name>
<protein>
    <recommendedName>
        <fullName>Netrin receptor UNC5A</fullName>
    </recommendedName>
    <alternativeName>
        <fullName>Protein unc-5 homolog 1</fullName>
    </alternativeName>
    <alternativeName>
        <fullName>Protein unc-5 homolog A</fullName>
    </alternativeName>
</protein>
<dbReference type="EMBL" id="AJ487852">
    <property type="protein sequence ID" value="CAD32250.1"/>
    <property type="molecule type" value="mRNA"/>
</dbReference>
<dbReference type="EMBL" id="AK122575">
    <property type="protein sequence ID" value="BAC65857.1"/>
    <property type="status" value="ALT_INIT"/>
    <property type="molecule type" value="mRNA"/>
</dbReference>
<dbReference type="EMBL" id="BC058084">
    <property type="protein sequence ID" value="AAH58084.1"/>
    <property type="molecule type" value="mRNA"/>
</dbReference>
<dbReference type="CCDS" id="CCDS26537.1">
    <molecule id="Q8K1S4-1"/>
</dbReference>
<dbReference type="CCDS" id="CCDS79188.1">
    <molecule id="Q8K1S4-2"/>
</dbReference>
<dbReference type="RefSeq" id="NP_001298057.1">
    <molecule id="Q8K1S4-2"/>
    <property type="nucleotide sequence ID" value="NM_001311128.2"/>
</dbReference>
<dbReference type="RefSeq" id="NP_694771.1">
    <molecule id="Q8K1S4-1"/>
    <property type="nucleotide sequence ID" value="NM_153131.5"/>
</dbReference>
<dbReference type="SMR" id="Q8K1S4"/>
<dbReference type="BioGRID" id="223295">
    <property type="interactions" value="4"/>
</dbReference>
<dbReference type="FunCoup" id="Q8K1S4">
    <property type="interactions" value="687"/>
</dbReference>
<dbReference type="STRING" id="10090.ENSMUSP00000026994"/>
<dbReference type="GlyCosmos" id="Q8K1S4">
    <property type="glycosylation" value="3 sites, No reported glycans"/>
</dbReference>
<dbReference type="GlyGen" id="Q8K1S4">
    <property type="glycosylation" value="10 sites, 1 N-linked glycan (1 site), 1 O-linked glycan (2 sites)"/>
</dbReference>
<dbReference type="iPTMnet" id="Q8K1S4"/>
<dbReference type="PhosphoSitePlus" id="Q8K1S4"/>
<dbReference type="PaxDb" id="10090-ENSMUSP00000026994"/>
<dbReference type="ProteomicsDB" id="298200">
    <molecule id="Q8K1S4-1"/>
</dbReference>
<dbReference type="ProteomicsDB" id="298201">
    <molecule id="Q8K1S4-2"/>
</dbReference>
<dbReference type="ProteomicsDB" id="298202">
    <molecule id="Q8K1S4-3"/>
</dbReference>
<dbReference type="Antibodypedia" id="29143">
    <property type="antibodies" value="105 antibodies from 28 providers"/>
</dbReference>
<dbReference type="DNASU" id="107448"/>
<dbReference type="Ensembl" id="ENSMUST00000026994.14">
    <molecule id="Q8K1S4-1"/>
    <property type="protein sequence ID" value="ENSMUSP00000026994.8"/>
    <property type="gene ID" value="ENSMUSG00000025876.16"/>
</dbReference>
<dbReference type="Ensembl" id="ENSMUST00000109994.9">
    <molecule id="Q8K1S4-2"/>
    <property type="protein sequence ID" value="ENSMUSP00000105621.3"/>
    <property type="gene ID" value="ENSMUSG00000025876.16"/>
</dbReference>
<dbReference type="GeneID" id="107448"/>
<dbReference type="KEGG" id="mmu:107448"/>
<dbReference type="UCSC" id="uc007qpp.1">
    <molecule id="Q8K1S4-1"/>
    <property type="organism name" value="mouse"/>
</dbReference>
<dbReference type="UCSC" id="uc007qpq.1">
    <molecule id="Q8K1S4-2"/>
    <property type="organism name" value="mouse"/>
</dbReference>
<dbReference type="AGR" id="MGI:894682"/>
<dbReference type="CTD" id="90249"/>
<dbReference type="MGI" id="MGI:894682">
    <property type="gene designation" value="Unc5a"/>
</dbReference>
<dbReference type="VEuPathDB" id="HostDB:ENSMUSG00000025876"/>
<dbReference type="eggNOG" id="KOG1480">
    <property type="taxonomic scope" value="Eukaryota"/>
</dbReference>
<dbReference type="GeneTree" id="ENSGT00950000182815"/>
<dbReference type="HOGENOM" id="CLU_014383_0_0_1"/>
<dbReference type="InParanoid" id="Q8K1S4"/>
<dbReference type="OMA" id="QKSACTT"/>
<dbReference type="PhylomeDB" id="Q8K1S4"/>
<dbReference type="TreeFam" id="TF316767"/>
<dbReference type="Reactome" id="R-MMU-373752">
    <property type="pathway name" value="Netrin-1 signaling"/>
</dbReference>
<dbReference type="BioGRID-ORCS" id="107448">
    <property type="hits" value="1 hit in 78 CRISPR screens"/>
</dbReference>
<dbReference type="PRO" id="PR:Q8K1S4"/>
<dbReference type="Proteomes" id="UP000000589">
    <property type="component" value="Chromosome 13"/>
</dbReference>
<dbReference type="RNAct" id="Q8K1S4">
    <property type="molecule type" value="protein"/>
</dbReference>
<dbReference type="Bgee" id="ENSMUSG00000025876">
    <property type="expression patterns" value="Expressed in dentate gyrus of hippocampal formation granule cell and 160 other cell types or tissues"/>
</dbReference>
<dbReference type="ExpressionAtlas" id="Q8K1S4">
    <property type="expression patterns" value="baseline and differential"/>
</dbReference>
<dbReference type="GO" id="GO:0005829">
    <property type="term" value="C:cytosol"/>
    <property type="evidence" value="ECO:0000304"/>
    <property type="project" value="Reactome"/>
</dbReference>
<dbReference type="GO" id="GO:0045121">
    <property type="term" value="C:membrane raft"/>
    <property type="evidence" value="ECO:0007669"/>
    <property type="project" value="UniProtKB-SubCell"/>
</dbReference>
<dbReference type="GO" id="GO:0032589">
    <property type="term" value="C:neuron projection membrane"/>
    <property type="evidence" value="ECO:0000250"/>
    <property type="project" value="UniProtKB"/>
</dbReference>
<dbReference type="GO" id="GO:0032809">
    <property type="term" value="C:neuronal cell body membrane"/>
    <property type="evidence" value="ECO:0000250"/>
    <property type="project" value="UniProtKB"/>
</dbReference>
<dbReference type="GO" id="GO:0005886">
    <property type="term" value="C:plasma membrane"/>
    <property type="evidence" value="ECO:0000250"/>
    <property type="project" value="UniProtKB"/>
</dbReference>
<dbReference type="GO" id="GO:0005042">
    <property type="term" value="F:netrin receptor activity"/>
    <property type="evidence" value="ECO:0007669"/>
    <property type="project" value="InterPro"/>
</dbReference>
<dbReference type="GO" id="GO:0033564">
    <property type="term" value="P:anterior/posterior axon guidance"/>
    <property type="evidence" value="ECO:0000315"/>
    <property type="project" value="MGI"/>
</dbReference>
<dbReference type="GO" id="GO:0006915">
    <property type="term" value="P:apoptotic process"/>
    <property type="evidence" value="ECO:0007669"/>
    <property type="project" value="UniProtKB-KW"/>
</dbReference>
<dbReference type="GO" id="GO:0038007">
    <property type="term" value="P:netrin-activated signaling pathway"/>
    <property type="evidence" value="ECO:0000250"/>
    <property type="project" value="UniProtKB"/>
</dbReference>
<dbReference type="GO" id="GO:0031175">
    <property type="term" value="P:neuron projection development"/>
    <property type="evidence" value="ECO:0000250"/>
    <property type="project" value="UniProtKB"/>
</dbReference>
<dbReference type="CDD" id="cd08800">
    <property type="entry name" value="Death_UNC5A"/>
    <property type="match status" value="1"/>
</dbReference>
<dbReference type="FunFam" id="1.10.533.10:FF:000001">
    <property type="entry name" value="Unc-5 netrin receptor B"/>
    <property type="match status" value="1"/>
</dbReference>
<dbReference type="FunFam" id="2.20.100.10:FF:000002">
    <property type="entry name" value="Unc-5 netrin receptor C"/>
    <property type="match status" value="1"/>
</dbReference>
<dbReference type="FunFam" id="2.20.100.10:FF:000008">
    <property type="entry name" value="Unc-5 netrin receptor C"/>
    <property type="match status" value="1"/>
</dbReference>
<dbReference type="FunFam" id="2.60.220.30:FF:000003">
    <property type="entry name" value="Unc-5 netrin receptor C"/>
    <property type="match status" value="1"/>
</dbReference>
<dbReference type="FunFam" id="2.60.40.10:FF:000037">
    <property type="entry name" value="Unc-5 netrin receptor C"/>
    <property type="match status" value="1"/>
</dbReference>
<dbReference type="FunFam" id="2.60.40.10:FF:000039">
    <property type="entry name" value="Unc-5 netrin receptor C"/>
    <property type="match status" value="1"/>
</dbReference>
<dbReference type="Gene3D" id="2.60.220.30">
    <property type="match status" value="1"/>
</dbReference>
<dbReference type="Gene3D" id="1.10.533.10">
    <property type="entry name" value="Death Domain, Fas"/>
    <property type="match status" value="1"/>
</dbReference>
<dbReference type="Gene3D" id="2.60.40.10">
    <property type="entry name" value="Immunoglobulins"/>
    <property type="match status" value="2"/>
</dbReference>
<dbReference type="Gene3D" id="2.20.100.10">
    <property type="entry name" value="Thrombospondin type-1 (TSP1) repeat"/>
    <property type="match status" value="2"/>
</dbReference>
<dbReference type="InterPro" id="IPR011029">
    <property type="entry name" value="DEATH-like_dom_sf"/>
</dbReference>
<dbReference type="InterPro" id="IPR000488">
    <property type="entry name" value="Death_dom"/>
</dbReference>
<dbReference type="InterPro" id="IPR042155">
    <property type="entry name" value="Death_UNC5A"/>
</dbReference>
<dbReference type="InterPro" id="IPR007110">
    <property type="entry name" value="Ig-like_dom"/>
</dbReference>
<dbReference type="InterPro" id="IPR036179">
    <property type="entry name" value="Ig-like_dom_sf"/>
</dbReference>
<dbReference type="InterPro" id="IPR013783">
    <property type="entry name" value="Ig-like_fold"/>
</dbReference>
<dbReference type="InterPro" id="IPR013098">
    <property type="entry name" value="Ig_I-set"/>
</dbReference>
<dbReference type="InterPro" id="IPR003599">
    <property type="entry name" value="Ig_sub"/>
</dbReference>
<dbReference type="InterPro" id="IPR000884">
    <property type="entry name" value="TSP1_rpt"/>
</dbReference>
<dbReference type="InterPro" id="IPR036383">
    <property type="entry name" value="TSP1_rpt_sf"/>
</dbReference>
<dbReference type="InterPro" id="IPR037936">
    <property type="entry name" value="UNC5"/>
</dbReference>
<dbReference type="InterPro" id="IPR033772">
    <property type="entry name" value="UPA"/>
</dbReference>
<dbReference type="InterPro" id="IPR000906">
    <property type="entry name" value="ZU5_dom"/>
</dbReference>
<dbReference type="PANTHER" id="PTHR12582">
    <property type="entry name" value="NETRIN RECEPTOR UNC5"/>
    <property type="match status" value="1"/>
</dbReference>
<dbReference type="PANTHER" id="PTHR12582:SF4">
    <property type="entry name" value="NETRIN RECEPTOR UNC5A"/>
    <property type="match status" value="1"/>
</dbReference>
<dbReference type="Pfam" id="PF00531">
    <property type="entry name" value="Death"/>
    <property type="match status" value="1"/>
</dbReference>
<dbReference type="Pfam" id="PF07679">
    <property type="entry name" value="I-set"/>
    <property type="match status" value="1"/>
</dbReference>
<dbReference type="Pfam" id="PF00090">
    <property type="entry name" value="TSP_1"/>
    <property type="match status" value="2"/>
</dbReference>
<dbReference type="Pfam" id="PF17217">
    <property type="entry name" value="UPA"/>
    <property type="match status" value="1"/>
</dbReference>
<dbReference type="Pfam" id="PF00791">
    <property type="entry name" value="ZU5"/>
    <property type="match status" value="1"/>
</dbReference>
<dbReference type="PRINTS" id="PR01705">
    <property type="entry name" value="TSP1REPEAT"/>
</dbReference>
<dbReference type="SMART" id="SM00005">
    <property type="entry name" value="DEATH"/>
    <property type="match status" value="1"/>
</dbReference>
<dbReference type="SMART" id="SM00409">
    <property type="entry name" value="IG"/>
    <property type="match status" value="1"/>
</dbReference>
<dbReference type="SMART" id="SM00209">
    <property type="entry name" value="TSP1"/>
    <property type="match status" value="2"/>
</dbReference>
<dbReference type="SMART" id="SM00218">
    <property type="entry name" value="ZU5"/>
    <property type="match status" value="1"/>
</dbReference>
<dbReference type="SUPFAM" id="SSF47986">
    <property type="entry name" value="DEATH domain"/>
    <property type="match status" value="1"/>
</dbReference>
<dbReference type="SUPFAM" id="SSF48726">
    <property type="entry name" value="Immunoglobulin"/>
    <property type="match status" value="2"/>
</dbReference>
<dbReference type="SUPFAM" id="SSF82895">
    <property type="entry name" value="TSP-1 type 1 repeat"/>
    <property type="match status" value="2"/>
</dbReference>
<dbReference type="PROSITE" id="PS50835">
    <property type="entry name" value="IG_LIKE"/>
    <property type="match status" value="1"/>
</dbReference>
<dbReference type="PROSITE" id="PS50092">
    <property type="entry name" value="TSP1"/>
    <property type="match status" value="2"/>
</dbReference>
<dbReference type="PROSITE" id="PS51145">
    <property type="entry name" value="ZU5"/>
    <property type="match status" value="1"/>
</dbReference>
<accession>Q8K1S4</accession>
<accession>Q6PEF7</accession>
<accession>Q80T71</accession>
<sequence>MAVRPGLWPALLGIVLTAWLRGSGAQQSATVANPVPGANPDLLPHFLVEPEDVYIVKNKPVLLVCKAVPATQIFFKCNGEWVRQVDHVIERSTDGSSGLPTMEVRINVSRQQVEKVFGLEEYWCQCVAWSSSGTTKSQKAYIRIAYLRKNFEQEPLAKEVSLEQGIVLPCRPPEGIPPAEVEWLRNEDLVDPSLDPNVYITREHSLVVRQARLADTANYTCVAKNIVARRRSASAAVIVYVNGGWSTWTEWSVCSASCGRGWQKRSRSCTNPAPLNGGAFCEGQNVQKTACATLCPVDGSWSPWSKWSACGLDCTHWRSRECSDPAPRNGGEECRGADLDTRNCTSDLCLHTSSGPEDVALYIGLVAVAVCLILLLLVLVLIYCRKKEGLDSDVADSSILTSGFQPVSIKPSKADNPHLLTIQPDLSTTTTTYQGSLCPRQDGPSPKFQLSNGHLLSPLGSGRHTLHHSSPTSEAEDFVSRLSTQNYFRSLPRGTSNMAYGTFNFLGGRLMIPNTGISLLIPPDAIPRGKIYEIYLTLHKPEDVRLPLAGCQTLLSPIVSCGPPGVLLTRPVILAMDHCGEPSPDSWSLRLKKQSCEGSWEDVLHLGEESPSHLYYCQLEAGACYVFTEQLGRFALVGEALSVAATKRLRLLLFAPVACTSLEYNIRVYCLHDTHDALKEVVQLEKQLGGQLIQEPRVLHFKDSYHNLRLSIHDVPSSLWKSKLLVSYQEIPFYHIWNGTQQYLHCTFTLERVNASTSDLACKVWVWQVEGDGQSFNINFNITKDTRFAEMLALESEGGVPALVGPSAFKIPFLIRQKIITSLDPPCSRGADWRTLAQKLHLDSHLSFFASKPSPTAMILNLWEARHFPNGNLGQLAAAVAGLGQPDAGLFTVSEAEC</sequence>
<comment type="function">
    <text evidence="2">Receptor for netrin required for axon guidance. Functions in the netrin signaling pathway and promotes neurite outgrowth in response to NTN1. Mediates axon repulsion of neuronal growth cones in the developing nervous system in response to netrin. Axon repulsion in growth cones may be mediated by its association with DCC that may trigger signaling for repulsion. It also acts as a dependence receptor required for apoptosis induction when not associated with netrin ligand.</text>
</comment>
<comment type="subunit">
    <text evidence="2 8 9">Homodimer and homooligomer. Interacts with the cytoplasmic part of DCC. Interacts with MAGED1. Interacts with PRKCABP, possibly mediating some interaction with PKC (By similarity). Interacts (via extracellular domain) with FLRT2 (via extracellular domain) (PubMed:25374360). Interacts (via extracellular domain) with FLRT3 (via extracellular domain) (PubMed:22405201).</text>
</comment>
<comment type="subcellular location">
    <subcellularLocation>
        <location evidence="10">Cell membrane</location>
        <topology evidence="4">Single-pass type I membrane protein</topology>
    </subcellularLocation>
    <subcellularLocation>
        <location evidence="2">Membrane raft</location>
    </subcellularLocation>
    <subcellularLocation>
        <location evidence="2">Cell projection</location>
        <location evidence="2">Neuron projection</location>
    </subcellularLocation>
    <text evidence="2">The interaction with PRKCABP regulates its surface expression and leads to its removal from the surface of neurons and growth cones.</text>
</comment>
<comment type="alternative products">
    <event type="alternative splicing"/>
    <isoform>
        <id>Q8K1S4-1</id>
        <name>1</name>
        <sequence type="displayed"/>
    </isoform>
    <isoform>
        <id>Q8K1S4-2</id>
        <name>2</name>
        <sequence type="described" ref="VSP_011697"/>
    </isoform>
    <isoform>
        <id>Q8K1S4-3</id>
        <name>3</name>
        <sequence type="described" ref="VSP_011696"/>
    </isoform>
</comment>
<comment type="tissue specificity">
    <text evidence="7">Restricted to central nervous system.</text>
</comment>
<comment type="domain">
    <text evidence="2">The ZU5 domain mediates the interaction with MAGED1, which participates in the induction of apoptosis.</text>
</comment>
<comment type="PTM">
    <text evidence="1 2">Phosphorylated on cytoplasmic tyrosine residues (By similarity). Phosphorylated by PKC in vitro (By similarity).</text>
</comment>
<comment type="PTM">
    <text evidence="2">Proteolytically cleaved by caspases during apoptosis. The cleavage does not take place when the receptor is associated with netrin ligand. Its cleavage by caspases is required to induce apoptosis.</text>
</comment>
<comment type="PTM">
    <text evidence="10">The two extracellular TSRs of UNC5A contain WxxWxxWxxC motifs that can be C-mannosylated on all tryptophans. DPY19L1 preferentially mannosylates the first two tryptophans and DPY19L3 prefers the third. C-mannosylation by DPY19L1 is required for transport of UNC5A from the endoplasmic reticulum to the cell surface.</text>
</comment>
<comment type="similarity">
    <text evidence="13">Belongs to the unc-5 family.</text>
</comment>
<comment type="sequence caution" evidence="13">
    <conflict type="erroneous initiation">
        <sequence resource="EMBL-CDS" id="BAC65857"/>
    </conflict>
    <text>Extended N-terminus.</text>
</comment>